<name>EX7L_STAAB</name>
<evidence type="ECO:0000255" key="1">
    <source>
        <dbReference type="HAMAP-Rule" id="MF_00378"/>
    </source>
</evidence>
<keyword id="KW-0963">Cytoplasm</keyword>
<keyword id="KW-0269">Exonuclease</keyword>
<keyword id="KW-0378">Hydrolase</keyword>
<keyword id="KW-0540">Nuclease</keyword>
<feature type="chain" id="PRO_0000273695" description="Exodeoxyribonuclease 7 large subunit">
    <location>
        <begin position="1"/>
        <end position="445"/>
    </location>
</feature>
<organism>
    <name type="scientific">Staphylococcus aureus (strain bovine RF122 / ET3-1)</name>
    <dbReference type="NCBI Taxonomy" id="273036"/>
    <lineage>
        <taxon>Bacteria</taxon>
        <taxon>Bacillati</taxon>
        <taxon>Bacillota</taxon>
        <taxon>Bacilli</taxon>
        <taxon>Bacillales</taxon>
        <taxon>Staphylococcaceae</taxon>
        <taxon>Staphylococcus</taxon>
    </lineage>
</organism>
<reference key="1">
    <citation type="journal article" date="2007" name="PLoS ONE">
        <title>Molecular correlates of host specialization in Staphylococcus aureus.</title>
        <authorList>
            <person name="Herron-Olson L."/>
            <person name="Fitzgerald J.R."/>
            <person name="Musser J.M."/>
            <person name="Kapur V."/>
        </authorList>
    </citation>
    <scope>NUCLEOTIDE SEQUENCE [LARGE SCALE GENOMIC DNA]</scope>
    <source>
        <strain>bovine RF122 / ET3-1</strain>
    </source>
</reference>
<dbReference type="EC" id="3.1.11.6" evidence="1"/>
<dbReference type="EMBL" id="AJ938182">
    <property type="protein sequence ID" value="CAI81085.1"/>
    <property type="molecule type" value="Genomic_DNA"/>
</dbReference>
<dbReference type="RefSeq" id="WP_001286923.1">
    <property type="nucleotide sequence ID" value="NC_007622.1"/>
</dbReference>
<dbReference type="SMR" id="Q2YYB8"/>
<dbReference type="KEGG" id="sab:SAB1396c"/>
<dbReference type="HOGENOM" id="CLU_023625_3_1_9"/>
<dbReference type="GO" id="GO:0005737">
    <property type="term" value="C:cytoplasm"/>
    <property type="evidence" value="ECO:0007669"/>
    <property type="project" value="UniProtKB-SubCell"/>
</dbReference>
<dbReference type="GO" id="GO:0009318">
    <property type="term" value="C:exodeoxyribonuclease VII complex"/>
    <property type="evidence" value="ECO:0007669"/>
    <property type="project" value="InterPro"/>
</dbReference>
<dbReference type="GO" id="GO:0008855">
    <property type="term" value="F:exodeoxyribonuclease VII activity"/>
    <property type="evidence" value="ECO:0007669"/>
    <property type="project" value="UniProtKB-UniRule"/>
</dbReference>
<dbReference type="GO" id="GO:0003676">
    <property type="term" value="F:nucleic acid binding"/>
    <property type="evidence" value="ECO:0007669"/>
    <property type="project" value="InterPro"/>
</dbReference>
<dbReference type="GO" id="GO:0006308">
    <property type="term" value="P:DNA catabolic process"/>
    <property type="evidence" value="ECO:0007669"/>
    <property type="project" value="UniProtKB-UniRule"/>
</dbReference>
<dbReference type="CDD" id="cd04489">
    <property type="entry name" value="ExoVII_LU_OBF"/>
    <property type="match status" value="1"/>
</dbReference>
<dbReference type="HAMAP" id="MF_00378">
    <property type="entry name" value="Exonuc_7_L"/>
    <property type="match status" value="1"/>
</dbReference>
<dbReference type="InterPro" id="IPR003753">
    <property type="entry name" value="Exonuc_VII_L"/>
</dbReference>
<dbReference type="InterPro" id="IPR020579">
    <property type="entry name" value="Exonuc_VII_lsu_C"/>
</dbReference>
<dbReference type="InterPro" id="IPR025824">
    <property type="entry name" value="OB-fold_nuc-bd_dom"/>
</dbReference>
<dbReference type="NCBIfam" id="TIGR00237">
    <property type="entry name" value="xseA"/>
    <property type="match status" value="1"/>
</dbReference>
<dbReference type="PANTHER" id="PTHR30008">
    <property type="entry name" value="EXODEOXYRIBONUCLEASE 7 LARGE SUBUNIT"/>
    <property type="match status" value="1"/>
</dbReference>
<dbReference type="PANTHER" id="PTHR30008:SF0">
    <property type="entry name" value="EXODEOXYRIBONUCLEASE 7 LARGE SUBUNIT"/>
    <property type="match status" value="1"/>
</dbReference>
<dbReference type="Pfam" id="PF02601">
    <property type="entry name" value="Exonuc_VII_L"/>
    <property type="match status" value="1"/>
</dbReference>
<dbReference type="Pfam" id="PF13742">
    <property type="entry name" value="tRNA_anti_2"/>
    <property type="match status" value="1"/>
</dbReference>
<proteinExistence type="inferred from homology"/>
<protein>
    <recommendedName>
        <fullName evidence="1">Exodeoxyribonuclease 7 large subunit</fullName>
        <ecNumber evidence="1">3.1.11.6</ecNumber>
    </recommendedName>
    <alternativeName>
        <fullName evidence="1">Exodeoxyribonuclease VII large subunit</fullName>
        <shortName evidence="1">Exonuclease VII large subunit</shortName>
    </alternativeName>
</protein>
<sequence>MSDYLSVSALTKYIKYKFDQDPHLQSVLIKGELSNFKKHSSGHLYFNVKDKESVISAMMFKGSASKLNFEPKEGDEVLLEARVSVFERRGNYQIYVNKMQLDGIGNLYQKLEALKKKLTEEGCFDKANKKSIPKFPKKIAVLTASTGAAIRDIHSTINSRFPLAEQIQISTLVQGEKAKDDIIEKIEYADSLGVDTIIVGRGGGSIEDLWNFNEEAVVRAIYNCKTPIISAVGHETDFTLSDFAADIRAATPTQAAVIATPDQYELLQQIQQYQFTLTRFIKKHLEQQRKHIEHLSSYYKFKQPTLLYDQQIQRRDDLEKRLKQQIQATFEQQRHRLMLLQQRYNLKALLSSVNQEQQNNLQLTNQLVKLLNSKILSYKNDLKNKVENLNNLSPTNTMLRGYAIVNKKDEVITSTKDLTENDQLTLTMKDGLVDAKVTKVRCNND</sequence>
<gene>
    <name evidence="1" type="primary">xseA</name>
    <name type="ordered locus">SAB1396c</name>
</gene>
<comment type="function">
    <text evidence="1">Bidirectionally degrades single-stranded DNA into large acid-insoluble oligonucleotides, which are then degraded further into small acid-soluble oligonucleotides.</text>
</comment>
<comment type="catalytic activity">
    <reaction evidence="1">
        <text>Exonucleolytic cleavage in either 5'- to 3'- or 3'- to 5'-direction to yield nucleoside 5'-phosphates.</text>
        <dbReference type="EC" id="3.1.11.6"/>
    </reaction>
</comment>
<comment type="subunit">
    <text evidence="1">Heterooligomer composed of large and small subunits.</text>
</comment>
<comment type="subcellular location">
    <subcellularLocation>
        <location evidence="1">Cytoplasm</location>
    </subcellularLocation>
</comment>
<comment type="similarity">
    <text evidence="1">Belongs to the XseA family.</text>
</comment>
<accession>Q2YYB8</accession>